<protein>
    <recommendedName>
        <fullName evidence="1">Crossover junction endodeoxyribonuclease RuvC</fullName>
        <ecNumber evidence="1">3.1.21.10</ecNumber>
    </recommendedName>
    <alternativeName>
        <fullName evidence="1">Holliday junction nuclease RuvC</fullName>
    </alternativeName>
    <alternativeName>
        <fullName evidence="1">Holliday junction resolvase RuvC</fullName>
    </alternativeName>
</protein>
<reference key="1">
    <citation type="journal article" date="2006" name="J. Bacteriol.">
        <title>Comparative genomic evidence for a close relationship between the dimorphic prosthecate bacteria Hyphomonas neptunium and Caulobacter crescentus.</title>
        <authorList>
            <person name="Badger J.H."/>
            <person name="Hoover T.R."/>
            <person name="Brun Y.V."/>
            <person name="Weiner R.M."/>
            <person name="Laub M.T."/>
            <person name="Alexandre G."/>
            <person name="Mrazek J."/>
            <person name="Ren Q."/>
            <person name="Paulsen I.T."/>
            <person name="Nelson K.E."/>
            <person name="Khouri H.M."/>
            <person name="Radune D."/>
            <person name="Sosa J."/>
            <person name="Dodson R.J."/>
            <person name="Sullivan S.A."/>
            <person name="Rosovitz M.J."/>
            <person name="Madupu R."/>
            <person name="Brinkac L.M."/>
            <person name="Durkin A.S."/>
            <person name="Daugherty S.C."/>
            <person name="Kothari S.P."/>
            <person name="Giglio M.G."/>
            <person name="Zhou L."/>
            <person name="Haft D.H."/>
            <person name="Selengut J.D."/>
            <person name="Davidsen T.M."/>
            <person name="Yang Q."/>
            <person name="Zafar N."/>
            <person name="Ward N.L."/>
        </authorList>
    </citation>
    <scope>NUCLEOTIDE SEQUENCE [LARGE SCALE GENOMIC DNA]</scope>
    <source>
        <strain>ATCC 15444</strain>
    </source>
</reference>
<keyword id="KW-0963">Cytoplasm</keyword>
<keyword id="KW-0227">DNA damage</keyword>
<keyword id="KW-0233">DNA recombination</keyword>
<keyword id="KW-0234">DNA repair</keyword>
<keyword id="KW-0238">DNA-binding</keyword>
<keyword id="KW-0255">Endonuclease</keyword>
<keyword id="KW-0378">Hydrolase</keyword>
<keyword id="KW-0460">Magnesium</keyword>
<keyword id="KW-0479">Metal-binding</keyword>
<keyword id="KW-0540">Nuclease</keyword>
<keyword id="KW-1185">Reference proteome</keyword>
<gene>
    <name evidence="1" type="primary">ruvC</name>
    <name type="ordered locus">HNE_0145</name>
</gene>
<organism>
    <name type="scientific">Hyphomonas neptunium (strain ATCC 15444)</name>
    <dbReference type="NCBI Taxonomy" id="228405"/>
    <lineage>
        <taxon>Bacteria</taxon>
        <taxon>Pseudomonadati</taxon>
        <taxon>Pseudomonadota</taxon>
        <taxon>Alphaproteobacteria</taxon>
        <taxon>Hyphomonadales</taxon>
        <taxon>Hyphomonadaceae</taxon>
        <taxon>Hyphomonas</taxon>
    </lineage>
</organism>
<proteinExistence type="inferred from homology"/>
<accession>Q0C5W4</accession>
<feature type="chain" id="PRO_0000332423" description="Crossover junction endodeoxyribonuclease RuvC">
    <location>
        <begin position="1"/>
        <end position="167"/>
    </location>
</feature>
<feature type="active site" evidence="1">
    <location>
        <position position="11"/>
    </location>
</feature>
<feature type="active site" evidence="1">
    <location>
        <position position="71"/>
    </location>
</feature>
<feature type="active site" evidence="1">
    <location>
        <position position="143"/>
    </location>
</feature>
<feature type="binding site" evidence="1">
    <location>
        <position position="11"/>
    </location>
    <ligand>
        <name>Mg(2+)</name>
        <dbReference type="ChEBI" id="CHEBI:18420"/>
        <label>1</label>
    </ligand>
</feature>
<feature type="binding site" evidence="1">
    <location>
        <position position="71"/>
    </location>
    <ligand>
        <name>Mg(2+)</name>
        <dbReference type="ChEBI" id="CHEBI:18420"/>
        <label>2</label>
    </ligand>
</feature>
<feature type="binding site" evidence="1">
    <location>
        <position position="143"/>
    </location>
    <ligand>
        <name>Mg(2+)</name>
        <dbReference type="ChEBI" id="CHEBI:18420"/>
        <label>1</label>
    </ligand>
</feature>
<name>RUVC_HYPNA</name>
<sequence>MSTPIRILGIDPGLRHTGWGVIEQSGARLVHIAHGVIDPPTDLSMAERLGHIFEAVGELARHHAPHAAGVEETLVNANPRSALKLGQARGAAMAALAMAGVSVAEFAPRQIKLSVVGTGTADKDQVKFMVQRLLPRAGEMKLDAADALACAICAAHHLPLQMKRGAA</sequence>
<evidence type="ECO:0000255" key="1">
    <source>
        <dbReference type="HAMAP-Rule" id="MF_00034"/>
    </source>
</evidence>
<dbReference type="EC" id="3.1.21.10" evidence="1"/>
<dbReference type="EMBL" id="CP000158">
    <property type="protein sequence ID" value="ABI78261.1"/>
    <property type="molecule type" value="Genomic_DNA"/>
</dbReference>
<dbReference type="RefSeq" id="WP_011645179.1">
    <property type="nucleotide sequence ID" value="NC_008358.1"/>
</dbReference>
<dbReference type="SMR" id="Q0C5W4"/>
<dbReference type="STRING" id="228405.HNE_0145"/>
<dbReference type="KEGG" id="hne:HNE_0145"/>
<dbReference type="eggNOG" id="COG0817">
    <property type="taxonomic scope" value="Bacteria"/>
</dbReference>
<dbReference type="HOGENOM" id="CLU_091257_1_0_5"/>
<dbReference type="Proteomes" id="UP000001959">
    <property type="component" value="Chromosome"/>
</dbReference>
<dbReference type="GO" id="GO:0005737">
    <property type="term" value="C:cytoplasm"/>
    <property type="evidence" value="ECO:0007669"/>
    <property type="project" value="UniProtKB-SubCell"/>
</dbReference>
<dbReference type="GO" id="GO:0048476">
    <property type="term" value="C:Holliday junction resolvase complex"/>
    <property type="evidence" value="ECO:0007669"/>
    <property type="project" value="UniProtKB-UniRule"/>
</dbReference>
<dbReference type="GO" id="GO:0008821">
    <property type="term" value="F:crossover junction DNA endonuclease activity"/>
    <property type="evidence" value="ECO:0007669"/>
    <property type="project" value="UniProtKB-UniRule"/>
</dbReference>
<dbReference type="GO" id="GO:0003677">
    <property type="term" value="F:DNA binding"/>
    <property type="evidence" value="ECO:0007669"/>
    <property type="project" value="UniProtKB-KW"/>
</dbReference>
<dbReference type="GO" id="GO:0000287">
    <property type="term" value="F:magnesium ion binding"/>
    <property type="evidence" value="ECO:0007669"/>
    <property type="project" value="UniProtKB-UniRule"/>
</dbReference>
<dbReference type="GO" id="GO:0006310">
    <property type="term" value="P:DNA recombination"/>
    <property type="evidence" value="ECO:0007669"/>
    <property type="project" value="UniProtKB-UniRule"/>
</dbReference>
<dbReference type="GO" id="GO:0006281">
    <property type="term" value="P:DNA repair"/>
    <property type="evidence" value="ECO:0007669"/>
    <property type="project" value="UniProtKB-UniRule"/>
</dbReference>
<dbReference type="CDD" id="cd16962">
    <property type="entry name" value="RuvC"/>
    <property type="match status" value="1"/>
</dbReference>
<dbReference type="FunFam" id="3.30.420.10:FF:000002">
    <property type="entry name" value="Crossover junction endodeoxyribonuclease RuvC"/>
    <property type="match status" value="1"/>
</dbReference>
<dbReference type="Gene3D" id="3.30.420.10">
    <property type="entry name" value="Ribonuclease H-like superfamily/Ribonuclease H"/>
    <property type="match status" value="1"/>
</dbReference>
<dbReference type="HAMAP" id="MF_00034">
    <property type="entry name" value="RuvC"/>
    <property type="match status" value="1"/>
</dbReference>
<dbReference type="InterPro" id="IPR012337">
    <property type="entry name" value="RNaseH-like_sf"/>
</dbReference>
<dbReference type="InterPro" id="IPR036397">
    <property type="entry name" value="RNaseH_sf"/>
</dbReference>
<dbReference type="InterPro" id="IPR020563">
    <property type="entry name" value="X-over_junc_endoDNase_Mg_BS"/>
</dbReference>
<dbReference type="InterPro" id="IPR002176">
    <property type="entry name" value="X-over_junc_endoDNase_RuvC"/>
</dbReference>
<dbReference type="NCBIfam" id="TIGR00228">
    <property type="entry name" value="ruvC"/>
    <property type="match status" value="1"/>
</dbReference>
<dbReference type="PANTHER" id="PTHR30194">
    <property type="entry name" value="CROSSOVER JUNCTION ENDODEOXYRIBONUCLEASE RUVC"/>
    <property type="match status" value="1"/>
</dbReference>
<dbReference type="PANTHER" id="PTHR30194:SF3">
    <property type="entry name" value="CROSSOVER JUNCTION ENDODEOXYRIBONUCLEASE RUVC"/>
    <property type="match status" value="1"/>
</dbReference>
<dbReference type="Pfam" id="PF02075">
    <property type="entry name" value="RuvC"/>
    <property type="match status" value="1"/>
</dbReference>
<dbReference type="PRINTS" id="PR00696">
    <property type="entry name" value="RSOLVASERUVC"/>
</dbReference>
<dbReference type="SUPFAM" id="SSF53098">
    <property type="entry name" value="Ribonuclease H-like"/>
    <property type="match status" value="1"/>
</dbReference>
<dbReference type="PROSITE" id="PS01321">
    <property type="entry name" value="RUVC"/>
    <property type="match status" value="1"/>
</dbReference>
<comment type="function">
    <text evidence="1">The RuvA-RuvB-RuvC complex processes Holliday junction (HJ) DNA during genetic recombination and DNA repair. Endonuclease that resolves HJ intermediates. Cleaves cruciform DNA by making single-stranded nicks across the HJ at symmetrical positions within the homologous arms, yielding a 5'-phosphate and a 3'-hydroxyl group; requires a central core of homology in the junction. The consensus cleavage sequence is 5'-(A/T)TT(C/G)-3'. Cleavage occurs on the 3'-side of the TT dinucleotide at the point of strand exchange. HJ branch migration catalyzed by RuvA-RuvB allows RuvC to scan DNA until it finds its consensus sequence, where it cleaves and resolves the cruciform DNA.</text>
</comment>
<comment type="catalytic activity">
    <reaction evidence="1">
        <text>Endonucleolytic cleavage at a junction such as a reciprocal single-stranded crossover between two homologous DNA duplexes (Holliday junction).</text>
        <dbReference type="EC" id="3.1.21.10"/>
    </reaction>
</comment>
<comment type="cofactor">
    <cofactor evidence="1">
        <name>Mg(2+)</name>
        <dbReference type="ChEBI" id="CHEBI:18420"/>
    </cofactor>
    <text evidence="1">Binds 2 Mg(2+) ion per subunit.</text>
</comment>
<comment type="subunit">
    <text evidence="1">Homodimer which binds Holliday junction (HJ) DNA. The HJ becomes 2-fold symmetrical on binding to RuvC with unstacked arms; it has a different conformation from HJ DNA in complex with RuvA. In the full resolvosome a probable DNA-RuvA(4)-RuvB(12)-RuvC(2) complex forms which resolves the HJ.</text>
</comment>
<comment type="subcellular location">
    <subcellularLocation>
        <location evidence="1">Cytoplasm</location>
    </subcellularLocation>
</comment>
<comment type="similarity">
    <text evidence="1">Belongs to the RuvC family.</text>
</comment>